<gene>
    <name evidence="1" type="primary">katG</name>
    <name type="ordered locus">ECDH10B_4131</name>
</gene>
<comment type="function">
    <text evidence="1">Bifunctional enzyme with both catalase and broad-spectrum peroxidase activity.</text>
</comment>
<comment type="catalytic activity">
    <reaction evidence="1">
        <text>H2O2 + AH2 = A + 2 H2O</text>
        <dbReference type="Rhea" id="RHEA:30275"/>
        <dbReference type="ChEBI" id="CHEBI:13193"/>
        <dbReference type="ChEBI" id="CHEBI:15377"/>
        <dbReference type="ChEBI" id="CHEBI:16240"/>
        <dbReference type="ChEBI" id="CHEBI:17499"/>
        <dbReference type="EC" id="1.11.1.21"/>
    </reaction>
</comment>
<comment type="catalytic activity">
    <reaction evidence="1">
        <text>2 H2O2 = O2 + 2 H2O</text>
        <dbReference type="Rhea" id="RHEA:20309"/>
        <dbReference type="ChEBI" id="CHEBI:15377"/>
        <dbReference type="ChEBI" id="CHEBI:15379"/>
        <dbReference type="ChEBI" id="CHEBI:16240"/>
        <dbReference type="EC" id="1.11.1.21"/>
    </reaction>
</comment>
<comment type="cofactor">
    <cofactor evidence="1">
        <name>heme b</name>
        <dbReference type="ChEBI" id="CHEBI:60344"/>
    </cofactor>
    <text evidence="1">Binds 1 heme b (iron(II)-protoporphyrin IX) group per dimer.</text>
</comment>
<comment type="subunit">
    <text evidence="1">Homodimer or homotetramer.</text>
</comment>
<comment type="PTM">
    <text evidence="1">Formation of the three residue Trp-Tyr-Met cross-link is important for the catalase, but not the peroxidase activity of the enzyme.</text>
</comment>
<comment type="similarity">
    <text evidence="1">Belongs to the peroxidase family. Peroxidase/catalase subfamily.</text>
</comment>
<accession>B1XBA8</accession>
<reference key="1">
    <citation type="journal article" date="2008" name="J. Bacteriol.">
        <title>The complete genome sequence of Escherichia coli DH10B: insights into the biology of a laboratory workhorse.</title>
        <authorList>
            <person name="Durfee T."/>
            <person name="Nelson R."/>
            <person name="Baldwin S."/>
            <person name="Plunkett G. III"/>
            <person name="Burland V."/>
            <person name="Mau B."/>
            <person name="Petrosino J.F."/>
            <person name="Qin X."/>
            <person name="Muzny D.M."/>
            <person name="Ayele M."/>
            <person name="Gibbs R.A."/>
            <person name="Csorgo B."/>
            <person name="Posfai G."/>
            <person name="Weinstock G.M."/>
            <person name="Blattner F.R."/>
        </authorList>
    </citation>
    <scope>NUCLEOTIDE SEQUENCE [LARGE SCALE GENOMIC DNA]</scope>
    <source>
        <strain>K12 / DH10B</strain>
    </source>
</reference>
<feature type="chain" id="PRO_0000354777" description="Catalase-peroxidase">
    <location>
        <begin position="1"/>
        <end position="726"/>
    </location>
</feature>
<feature type="region of interest" description="Disordered" evidence="2">
    <location>
        <begin position="1"/>
        <end position="33"/>
    </location>
</feature>
<feature type="active site" description="Proton acceptor" evidence="1">
    <location>
        <position position="106"/>
    </location>
</feature>
<feature type="binding site" description="axial binding residue" evidence="1">
    <location>
        <position position="267"/>
    </location>
    <ligand>
        <name>heme b</name>
        <dbReference type="ChEBI" id="CHEBI:60344"/>
    </ligand>
    <ligandPart>
        <name>Fe</name>
        <dbReference type="ChEBI" id="CHEBI:18248"/>
    </ligandPart>
</feature>
<feature type="site" description="Transition state stabilizer" evidence="1">
    <location>
        <position position="102"/>
    </location>
</feature>
<feature type="cross-link" description="Tryptophyl-tyrosyl-methioninium (Trp-Tyr) (with M-252)" evidence="1">
    <location>
        <begin position="105"/>
        <end position="226"/>
    </location>
</feature>
<feature type="cross-link" description="Tryptophyl-tyrosyl-methioninium (Tyr-Met) (with W-105)" evidence="1">
    <location>
        <begin position="226"/>
        <end position="252"/>
    </location>
</feature>
<organism>
    <name type="scientific">Escherichia coli (strain K12 / DH10B)</name>
    <dbReference type="NCBI Taxonomy" id="316385"/>
    <lineage>
        <taxon>Bacteria</taxon>
        <taxon>Pseudomonadati</taxon>
        <taxon>Pseudomonadota</taxon>
        <taxon>Gammaproteobacteria</taxon>
        <taxon>Enterobacterales</taxon>
        <taxon>Enterobacteriaceae</taxon>
        <taxon>Escherichia</taxon>
    </lineage>
</organism>
<name>KATG_ECODH</name>
<protein>
    <recommendedName>
        <fullName evidence="1">Catalase-peroxidase</fullName>
        <shortName evidence="1">CP</shortName>
        <ecNumber evidence="1">1.11.1.21</ecNumber>
    </recommendedName>
    <alternativeName>
        <fullName evidence="1">Peroxidase/catalase</fullName>
    </alternativeName>
</protein>
<dbReference type="EC" id="1.11.1.21" evidence="1"/>
<dbReference type="EMBL" id="CP000948">
    <property type="protein sequence ID" value="ACB04954.1"/>
    <property type="molecule type" value="Genomic_DNA"/>
</dbReference>
<dbReference type="RefSeq" id="WP_001295695.1">
    <property type="nucleotide sequence ID" value="NC_010473.1"/>
</dbReference>
<dbReference type="SMR" id="B1XBA8"/>
<dbReference type="KEGG" id="ecd:ECDH10B_4131"/>
<dbReference type="HOGENOM" id="CLU_025424_2_0_6"/>
<dbReference type="GO" id="GO:0005829">
    <property type="term" value="C:cytosol"/>
    <property type="evidence" value="ECO:0007669"/>
    <property type="project" value="TreeGrafter"/>
</dbReference>
<dbReference type="GO" id="GO:0004096">
    <property type="term" value="F:catalase activity"/>
    <property type="evidence" value="ECO:0007669"/>
    <property type="project" value="UniProtKB-UniRule"/>
</dbReference>
<dbReference type="GO" id="GO:0020037">
    <property type="term" value="F:heme binding"/>
    <property type="evidence" value="ECO:0007669"/>
    <property type="project" value="InterPro"/>
</dbReference>
<dbReference type="GO" id="GO:0046872">
    <property type="term" value="F:metal ion binding"/>
    <property type="evidence" value="ECO:0007669"/>
    <property type="project" value="UniProtKB-KW"/>
</dbReference>
<dbReference type="GO" id="GO:0070301">
    <property type="term" value="P:cellular response to hydrogen peroxide"/>
    <property type="evidence" value="ECO:0007669"/>
    <property type="project" value="TreeGrafter"/>
</dbReference>
<dbReference type="GO" id="GO:0042744">
    <property type="term" value="P:hydrogen peroxide catabolic process"/>
    <property type="evidence" value="ECO:0007669"/>
    <property type="project" value="UniProtKB-KW"/>
</dbReference>
<dbReference type="CDD" id="cd08200">
    <property type="entry name" value="catalase_peroxidase_2"/>
    <property type="match status" value="1"/>
</dbReference>
<dbReference type="FunFam" id="1.10.420.10:FF:000002">
    <property type="entry name" value="Catalase-peroxidase"/>
    <property type="match status" value="1"/>
</dbReference>
<dbReference type="FunFam" id="1.10.420.10:FF:000004">
    <property type="entry name" value="Catalase-peroxidase"/>
    <property type="match status" value="1"/>
</dbReference>
<dbReference type="FunFam" id="1.10.520.10:FF:000002">
    <property type="entry name" value="Catalase-peroxidase"/>
    <property type="match status" value="1"/>
</dbReference>
<dbReference type="Gene3D" id="1.10.520.10">
    <property type="match status" value="2"/>
</dbReference>
<dbReference type="Gene3D" id="1.10.420.10">
    <property type="entry name" value="Peroxidase, domain 2"/>
    <property type="match status" value="2"/>
</dbReference>
<dbReference type="HAMAP" id="MF_01961">
    <property type="entry name" value="Catal_peroxid"/>
    <property type="match status" value="1"/>
</dbReference>
<dbReference type="InterPro" id="IPR000763">
    <property type="entry name" value="Catalase_peroxidase"/>
</dbReference>
<dbReference type="InterPro" id="IPR002016">
    <property type="entry name" value="Haem_peroxidase"/>
</dbReference>
<dbReference type="InterPro" id="IPR010255">
    <property type="entry name" value="Haem_peroxidase_sf"/>
</dbReference>
<dbReference type="InterPro" id="IPR019794">
    <property type="entry name" value="Peroxidases_AS"/>
</dbReference>
<dbReference type="InterPro" id="IPR019793">
    <property type="entry name" value="Peroxidases_heam-ligand_BS"/>
</dbReference>
<dbReference type="NCBIfam" id="TIGR00198">
    <property type="entry name" value="cat_per_HPI"/>
    <property type="match status" value="1"/>
</dbReference>
<dbReference type="NCBIfam" id="NF011635">
    <property type="entry name" value="PRK15061.1"/>
    <property type="match status" value="1"/>
</dbReference>
<dbReference type="PANTHER" id="PTHR30555:SF0">
    <property type="entry name" value="CATALASE-PEROXIDASE"/>
    <property type="match status" value="1"/>
</dbReference>
<dbReference type="PANTHER" id="PTHR30555">
    <property type="entry name" value="HYDROPEROXIDASE I, BIFUNCTIONAL CATALASE-PEROXIDASE"/>
    <property type="match status" value="1"/>
</dbReference>
<dbReference type="Pfam" id="PF00141">
    <property type="entry name" value="peroxidase"/>
    <property type="match status" value="2"/>
</dbReference>
<dbReference type="PRINTS" id="PR00460">
    <property type="entry name" value="BPEROXIDASE"/>
</dbReference>
<dbReference type="PRINTS" id="PR00458">
    <property type="entry name" value="PEROXIDASE"/>
</dbReference>
<dbReference type="SUPFAM" id="SSF48113">
    <property type="entry name" value="Heme-dependent peroxidases"/>
    <property type="match status" value="2"/>
</dbReference>
<dbReference type="PROSITE" id="PS00435">
    <property type="entry name" value="PEROXIDASE_1"/>
    <property type="match status" value="1"/>
</dbReference>
<dbReference type="PROSITE" id="PS00436">
    <property type="entry name" value="PEROXIDASE_2"/>
    <property type="match status" value="1"/>
</dbReference>
<dbReference type="PROSITE" id="PS50873">
    <property type="entry name" value="PEROXIDASE_4"/>
    <property type="match status" value="1"/>
</dbReference>
<proteinExistence type="inferred from homology"/>
<sequence>MSTSDDIHNTTATGKCPFHQGGHDQSAGAGTTTRDWWPNQLRVDLLNQHSNRSNPLGEDFDYRKEFSKLDYYGLKKDLKALLTESQPWWPADWGSYAGLFIRMAWHGAGTYRSIDGRGGAGRGQQRFAPLNSWPDNVSLDKARRLLWPIKQKYGQKISWADLFILAGNVALENSGFRTFGFGAGREDVWEPDLDVNWGDEKAWLTHRHPEALAKAPLGATEMGLIYVNPEGPDHSGEPLSAAAAIRATFGNMGMNDEETVALIAGGHTLGKTHGAGPTSNVGPDPEAAPIEEQGLGWASTYGSGVGADAITSGLEVVWTQTPTQWSNYFFENLFKYEWVQTRSPAGAIQFEAVDAPEIIPDPFDPSKKRKPTMLVTDLTLRFDPEFEKISRRFLNDPQAFNEAFARAWFKLTHRDMGPKSRYIGPEVPKEDLIWQDPLPQPIYNPTEQDIIDLKFAIADSGLSVSELVSVAWASASTFRGGDKRGGANGARLALMPQRDWDVNAAAVRALPVLEKIQKESGKASLADIIVLAGVVGVEKAASAAGLSIHVPFAPGRVDARQDQTDIEMFELLEPIADGFRNYRARLDVSTTESLLIDKAQQLTLTAPEMTALVGGMRVLGANFDGSKNGVFTDRVGVLSNDFFVNLLDMRYEWKATDESKELFEGRDRETGEVKFTASRADLVFGSNSVLRAVAEVYASSDAHEKFVKDFVAAWVKVMNLDRFDLL</sequence>
<keyword id="KW-0349">Heme</keyword>
<keyword id="KW-0376">Hydrogen peroxide</keyword>
<keyword id="KW-0408">Iron</keyword>
<keyword id="KW-0479">Metal-binding</keyword>
<keyword id="KW-0560">Oxidoreductase</keyword>
<keyword id="KW-0575">Peroxidase</keyword>
<evidence type="ECO:0000255" key="1">
    <source>
        <dbReference type="HAMAP-Rule" id="MF_01961"/>
    </source>
</evidence>
<evidence type="ECO:0000256" key="2">
    <source>
        <dbReference type="SAM" id="MobiDB-lite"/>
    </source>
</evidence>